<dbReference type="SMR" id="C0HL25"/>
<dbReference type="GO" id="GO:0006952">
    <property type="term" value="P:defense response"/>
    <property type="evidence" value="ECO:0007669"/>
    <property type="project" value="UniProtKB-KW"/>
</dbReference>
<dbReference type="InterPro" id="IPR005535">
    <property type="entry name" value="Cyclotide"/>
</dbReference>
<dbReference type="InterPro" id="IPR012324">
    <property type="entry name" value="Cyclotide_moebius_CS"/>
</dbReference>
<dbReference type="InterPro" id="IPR036146">
    <property type="entry name" value="Cyclotide_sf"/>
</dbReference>
<dbReference type="Pfam" id="PF03784">
    <property type="entry name" value="Cyclotide"/>
    <property type="match status" value="1"/>
</dbReference>
<dbReference type="SUPFAM" id="SSF57038">
    <property type="entry name" value="Cyclotides"/>
    <property type="match status" value="1"/>
</dbReference>
<dbReference type="PROSITE" id="PS51052">
    <property type="entry name" value="CYCLOTIDE"/>
    <property type="match status" value="1"/>
</dbReference>
<dbReference type="PROSITE" id="PS60009">
    <property type="entry name" value="CYCLOTIDE_MOEBIUS"/>
    <property type="match status" value="1"/>
</dbReference>
<evidence type="ECO:0000255" key="1">
    <source>
        <dbReference type="PROSITE-ProRule" id="PRU00395"/>
    </source>
</evidence>
<evidence type="ECO:0000269" key="2">
    <source>
    </source>
</evidence>
<evidence type="ECO:0000303" key="3">
    <source>
    </source>
</evidence>
<evidence type="ECO:0000305" key="4"/>
<evidence type="ECO:0000305" key="5">
    <source>
    </source>
</evidence>
<organism>
    <name type="scientific">Psychotria brachyceras</name>
    <dbReference type="NCBI Taxonomy" id="980682"/>
    <lineage>
        <taxon>Eukaryota</taxon>
        <taxon>Viridiplantae</taxon>
        <taxon>Streptophyta</taxon>
        <taxon>Embryophyta</taxon>
        <taxon>Tracheophyta</taxon>
        <taxon>Spermatophyta</taxon>
        <taxon>Magnoliopsida</taxon>
        <taxon>eudicotyledons</taxon>
        <taxon>Gunneridae</taxon>
        <taxon>Pentapetalae</taxon>
        <taxon>asterids</taxon>
        <taxon>lamiids</taxon>
        <taxon>Gentianales</taxon>
        <taxon>Rubiaceae</taxon>
        <taxon>Rubioideae</taxon>
        <taxon>Psychotrieae</taxon>
        <taxon>Psychotria</taxon>
    </lineage>
</organism>
<comment type="function">
    <text evidence="1">Probably participates in a plant defense mechanism.</text>
</comment>
<comment type="domain">
    <text evidence="4">The presence of a 'disulfide through disulfide knot' structurally defines this protein as a knottin.</text>
</comment>
<comment type="PTM">
    <text evidence="1 2">This is a cyclic peptide.</text>
</comment>
<comment type="mass spectrometry" mass="3314.22" method="MALDI" evidence="2"/>
<comment type="similarity">
    <text evidence="1">Belongs to the cyclotide family. Moebius subfamily.</text>
</comment>
<comment type="caution">
    <text evidence="1">This peptide is cyclic. The start position was chosen by similarity to Oak1 (kalata B1) for which the DNA sequence is known.</text>
</comment>
<name>CYPLB_PSYBR</name>
<keyword id="KW-0903">Direct protein sequencing</keyword>
<keyword id="KW-1015">Disulfide bond</keyword>
<keyword id="KW-0960">Knottin</keyword>
<keyword id="KW-0611">Plant defense</keyword>
<accession>C0HL25</accession>
<feature type="peptide" id="PRO_0000441787" description="Cyclotide psyleio B" evidence="2">
    <location>
        <begin position="1"/>
        <end position="29"/>
    </location>
</feature>
<feature type="disulfide bond" evidence="1">
    <location>
        <begin position="6"/>
        <end position="20"/>
    </location>
</feature>
<feature type="disulfide bond" evidence="1">
    <location>
        <begin position="10"/>
        <end position="22"/>
    </location>
</feature>
<feature type="disulfide bond" evidence="1">
    <location>
        <begin position="15"/>
        <end position="27"/>
    </location>
</feature>
<feature type="cross-link" description="Cyclopeptide (Gly-Arg)" evidence="5">
    <location>
        <begin position="1"/>
        <end position="29"/>
    </location>
</feature>
<feature type="unsure residue" description="L or I" evidence="3">
    <location>
        <position position="3"/>
    </location>
</feature>
<feature type="unsure residue" description="I or L" evidence="3">
    <location>
        <position position="5"/>
    </location>
</feature>
<protein>
    <recommendedName>
        <fullName evidence="3">Cyclotide psyleio B</fullName>
    </recommendedName>
</protein>
<sequence length="29" mass="2974">GDLPICGETCFGGTCNTPGCVCAWPVCNR</sequence>
<reference evidence="4" key="1">
    <citation type="journal article" date="2016" name="J. Nat. Prod.">
        <title>Isolation and Characterization of Cyclotides from Brazilian Psychotria: Significance in Plant Defense and Co-occurrence with Antioxidant Alkaloids.</title>
        <authorList>
            <person name="Matsuura H.N."/>
            <person name="Poth A.G."/>
            <person name="Yendo A.C."/>
            <person name="Fett-Neto A.G."/>
            <person name="Craik D.J."/>
        </authorList>
    </citation>
    <scope>PROTEIN SEQUENCE</scope>
    <scope>MASS SPECTROMETRY</scope>
    <scope>IDENTIFICATION BY MASS SPECTROMETRY</scope>
    <scope>CYCLIZATION</scope>
    <source>
        <tissue evidence="3">Leaf</tissue>
    </source>
</reference>
<proteinExistence type="evidence at protein level"/>